<gene>
    <name evidence="1" type="primary">rplQ</name>
    <name type="ordered locus">Mpop_2138</name>
</gene>
<comment type="subunit">
    <text evidence="1">Part of the 50S ribosomal subunit. Contacts protein L32.</text>
</comment>
<comment type="similarity">
    <text evidence="1">Belongs to the bacterial ribosomal protein bL17 family.</text>
</comment>
<proteinExistence type="inferred from homology"/>
<reference key="1">
    <citation type="submission" date="2008-04" db="EMBL/GenBank/DDBJ databases">
        <title>Complete sequence of chromosome of Methylobacterium populi BJ001.</title>
        <authorList>
            <consortium name="US DOE Joint Genome Institute"/>
            <person name="Copeland A."/>
            <person name="Lucas S."/>
            <person name="Lapidus A."/>
            <person name="Glavina del Rio T."/>
            <person name="Dalin E."/>
            <person name="Tice H."/>
            <person name="Bruce D."/>
            <person name="Goodwin L."/>
            <person name="Pitluck S."/>
            <person name="Chertkov O."/>
            <person name="Brettin T."/>
            <person name="Detter J.C."/>
            <person name="Han C."/>
            <person name="Kuske C.R."/>
            <person name="Schmutz J."/>
            <person name="Larimer F."/>
            <person name="Land M."/>
            <person name="Hauser L."/>
            <person name="Kyrpides N."/>
            <person name="Mikhailova N."/>
            <person name="Marx C."/>
            <person name="Richardson P."/>
        </authorList>
    </citation>
    <scope>NUCLEOTIDE SEQUENCE [LARGE SCALE GENOMIC DNA]</scope>
    <source>
        <strain>ATCC BAA-705 / NCIMB 13946 / BJ001</strain>
    </source>
</reference>
<dbReference type="EMBL" id="CP001029">
    <property type="protein sequence ID" value="ACB80300.1"/>
    <property type="molecule type" value="Genomic_DNA"/>
</dbReference>
<dbReference type="RefSeq" id="WP_012454037.1">
    <property type="nucleotide sequence ID" value="NC_010725.1"/>
</dbReference>
<dbReference type="SMR" id="B1Z767"/>
<dbReference type="STRING" id="441620.Mpop_2138"/>
<dbReference type="KEGG" id="mpo:Mpop_2138"/>
<dbReference type="eggNOG" id="COG0203">
    <property type="taxonomic scope" value="Bacteria"/>
</dbReference>
<dbReference type="HOGENOM" id="CLU_074407_2_0_5"/>
<dbReference type="OrthoDB" id="9809073at2"/>
<dbReference type="Proteomes" id="UP000007136">
    <property type="component" value="Chromosome"/>
</dbReference>
<dbReference type="GO" id="GO:0022625">
    <property type="term" value="C:cytosolic large ribosomal subunit"/>
    <property type="evidence" value="ECO:0007669"/>
    <property type="project" value="TreeGrafter"/>
</dbReference>
<dbReference type="GO" id="GO:0003735">
    <property type="term" value="F:structural constituent of ribosome"/>
    <property type="evidence" value="ECO:0007669"/>
    <property type="project" value="InterPro"/>
</dbReference>
<dbReference type="GO" id="GO:0006412">
    <property type="term" value="P:translation"/>
    <property type="evidence" value="ECO:0007669"/>
    <property type="project" value="UniProtKB-UniRule"/>
</dbReference>
<dbReference type="FunFam" id="3.90.1030.10:FF:000001">
    <property type="entry name" value="50S ribosomal protein L17"/>
    <property type="match status" value="1"/>
</dbReference>
<dbReference type="Gene3D" id="3.90.1030.10">
    <property type="entry name" value="Ribosomal protein L17"/>
    <property type="match status" value="1"/>
</dbReference>
<dbReference type="HAMAP" id="MF_01368">
    <property type="entry name" value="Ribosomal_bL17"/>
    <property type="match status" value="1"/>
</dbReference>
<dbReference type="InterPro" id="IPR000456">
    <property type="entry name" value="Ribosomal_bL17"/>
</dbReference>
<dbReference type="InterPro" id="IPR036373">
    <property type="entry name" value="Ribosomal_bL17_sf"/>
</dbReference>
<dbReference type="NCBIfam" id="TIGR00059">
    <property type="entry name" value="L17"/>
    <property type="match status" value="1"/>
</dbReference>
<dbReference type="PANTHER" id="PTHR14413:SF16">
    <property type="entry name" value="LARGE RIBOSOMAL SUBUNIT PROTEIN BL17M"/>
    <property type="match status" value="1"/>
</dbReference>
<dbReference type="PANTHER" id="PTHR14413">
    <property type="entry name" value="RIBOSOMAL PROTEIN L17"/>
    <property type="match status" value="1"/>
</dbReference>
<dbReference type="Pfam" id="PF01196">
    <property type="entry name" value="Ribosomal_L17"/>
    <property type="match status" value="1"/>
</dbReference>
<dbReference type="SUPFAM" id="SSF64263">
    <property type="entry name" value="Prokaryotic ribosomal protein L17"/>
    <property type="match status" value="1"/>
</dbReference>
<keyword id="KW-0687">Ribonucleoprotein</keyword>
<keyword id="KW-0689">Ribosomal protein</keyword>
<organism>
    <name type="scientific">Methylorubrum populi (strain ATCC BAA-705 / NCIMB 13946 / BJ001)</name>
    <name type="common">Methylobacterium populi</name>
    <dbReference type="NCBI Taxonomy" id="441620"/>
    <lineage>
        <taxon>Bacteria</taxon>
        <taxon>Pseudomonadati</taxon>
        <taxon>Pseudomonadota</taxon>
        <taxon>Alphaproteobacteria</taxon>
        <taxon>Hyphomicrobiales</taxon>
        <taxon>Methylobacteriaceae</taxon>
        <taxon>Methylorubrum</taxon>
    </lineage>
</organism>
<sequence length="138" mass="15504">MRHSYRGRRFNRTAEHRKAMFANMSAALIKHEQIVTTLPKAKDLRPVVEKLISLGRTDSIHARRLAMAQIRDADMVKKLFTVLGPRYQSRPGGYCRIMKAGFRYGDNAPMAVIEFVDRDVDARGKDSGPTAVETADAA</sequence>
<feature type="chain" id="PRO_1000144448" description="Large ribosomal subunit protein bL17">
    <location>
        <begin position="1"/>
        <end position="138"/>
    </location>
</feature>
<name>RL17_METPB</name>
<accession>B1Z767</accession>
<protein>
    <recommendedName>
        <fullName evidence="1">Large ribosomal subunit protein bL17</fullName>
    </recommendedName>
    <alternativeName>
        <fullName evidence="2">50S ribosomal protein L17</fullName>
    </alternativeName>
</protein>
<evidence type="ECO:0000255" key="1">
    <source>
        <dbReference type="HAMAP-Rule" id="MF_01368"/>
    </source>
</evidence>
<evidence type="ECO:0000305" key="2"/>